<sequence length="95" mass="10162">MSLVESDFEECLEFFSRPLPELLDGLLASLGEAGNLDSQGQRVEKAALVLELTGTECVREVVFKQEERGRLRGTEGPSRPPSSGAGDPRGATTLG</sequence>
<evidence type="ECO:0000256" key="1">
    <source>
        <dbReference type="SAM" id="MobiDB-lite"/>
    </source>
</evidence>
<evidence type="ECO:0000305" key="2"/>
<organism>
    <name type="scientific">Equine herpesvirus 2 (strain 86/87)</name>
    <name type="common">EHV-2</name>
    <dbReference type="NCBI Taxonomy" id="82831"/>
    <lineage>
        <taxon>Viruses</taxon>
        <taxon>Duplodnaviria</taxon>
        <taxon>Heunggongvirae</taxon>
        <taxon>Peploviricota</taxon>
        <taxon>Herviviricetes</taxon>
        <taxon>Herpesvirales</taxon>
        <taxon>Orthoherpesviridae</taxon>
        <taxon>Gammaherpesvirinae</taxon>
        <taxon>Percavirus</taxon>
        <taxon>Percavirus equidgamma2</taxon>
        <taxon>Equid gammaherpesvirus 2</taxon>
    </lineage>
</organism>
<comment type="similarity">
    <text evidence="2">Belongs to the herpesviridae UL91 family.</text>
</comment>
<protein>
    <recommendedName>
        <fullName>Uncharacterized gene 30 protein</fullName>
    </recommendedName>
</protein>
<name>UL91_EHV2</name>
<organismHost>
    <name type="scientific">Equus caballus</name>
    <name type="common">Horse</name>
    <dbReference type="NCBI Taxonomy" id="9796"/>
</organismHost>
<keyword id="KW-1185">Reference proteome</keyword>
<dbReference type="EMBL" id="U20824">
    <property type="protein sequence ID" value="AAC13817.1"/>
    <property type="molecule type" value="Genomic_DNA"/>
</dbReference>
<dbReference type="PIR" id="S55624">
    <property type="entry name" value="S55624"/>
</dbReference>
<dbReference type="KEGG" id="vg:1461058"/>
<dbReference type="Proteomes" id="UP000007083">
    <property type="component" value="Segment"/>
</dbReference>
<dbReference type="InterPro" id="IPR008002">
    <property type="entry name" value="Herpes_Orf30"/>
</dbReference>
<dbReference type="Pfam" id="PF05338">
    <property type="entry name" value="DUF717"/>
    <property type="match status" value="1"/>
</dbReference>
<gene>
    <name type="primary">30</name>
</gene>
<accession>Q66633</accession>
<feature type="chain" id="PRO_0000406017" description="Uncharacterized gene 30 protein">
    <location>
        <begin position="1"/>
        <end position="95"/>
    </location>
</feature>
<feature type="region of interest" description="Disordered" evidence="1">
    <location>
        <begin position="66"/>
        <end position="95"/>
    </location>
</feature>
<proteinExistence type="inferred from homology"/>
<reference key="1">
    <citation type="journal article" date="1995" name="J. Mol. Biol.">
        <title>The DNA sequence of equine herpesvirus 2.</title>
        <authorList>
            <person name="Telford E.A.R."/>
            <person name="Watson M.S."/>
            <person name="Aird H.C."/>
            <person name="Perry J."/>
            <person name="Davison A.J."/>
        </authorList>
    </citation>
    <scope>NUCLEOTIDE SEQUENCE [LARGE SCALE GENOMIC DNA]</scope>
</reference>